<organism>
    <name type="scientific">Rotavirus A (isolate RVA/Mouse/Brazil/EHP/1981/G16P[20])</name>
    <name type="common">RV-A</name>
    <dbReference type="NCBI Taxonomy" id="578840"/>
    <lineage>
        <taxon>Viruses</taxon>
        <taxon>Riboviria</taxon>
        <taxon>Orthornavirae</taxon>
        <taxon>Duplornaviricota</taxon>
        <taxon>Resentoviricetes</taxon>
        <taxon>Reovirales</taxon>
        <taxon>Sedoreoviridae</taxon>
        <taxon>Rotavirus</taxon>
        <taxon>Rotavirus A</taxon>
    </lineage>
</organism>
<accession>Q83444</accession>
<reference key="1">
    <citation type="journal article" date="1994" name="Virology">
        <title>Comparison of the rotavirus nonstructural protein NSP1 (NS53) from different species by sequence analysis and northern blot hybridization.</title>
        <authorList>
            <person name="Dunn S.J."/>
            <person name="Cross T.L."/>
            <person name="Greenberg H.B."/>
        </authorList>
    </citation>
    <scope>NUCLEOTIDE SEQUENCE [GENOMIC RNA]</scope>
</reference>
<comment type="function">
    <text evidence="1">Plays a role in the inhibition of host innate immunity by inducing the degradation of key host factors required to activate interferon production such as IRF3, IRF5 or IRF7. Associates with components of cullin RING ligases (CRLs) including CUL1 or CUL3, which are essential multisubunit ubiquitination complexes, to modulate their activities.</text>
</comment>
<comment type="subunit">
    <text evidence="1">Interacts (via C-terminus) with host IRF3; this interaction leads to IRF3 degradation. Interacts with host IRF7; this interaction leads to IRF7 degradation. Interacts with host CUL1 and CUL3.</text>
</comment>
<comment type="subcellular location">
    <subcellularLocation>
        <location evidence="1">Host cytoplasm</location>
        <location evidence="1">Host cytoskeleton</location>
    </subcellularLocation>
</comment>
<comment type="domain">
    <text evidence="1">The integrity of the zinc-binding domain in NSP1 is important for degradation of host IRF3.</text>
</comment>
<comment type="domain">
    <text evidence="1">The pLxIS motif targets host IRF3 for degradation; however phosphorylation of NSP1 pLxIS motif is not required for its activity.</text>
</comment>
<comment type="similarity">
    <text evidence="1">Belongs to the rotavirus NSP1 family.</text>
</comment>
<name>NSP1_ROTME</name>
<protein>
    <recommendedName>
        <fullName evidence="1">Non-structural protein 1</fullName>
        <shortName evidence="1">NSP1</shortName>
    </recommendedName>
    <alternativeName>
        <fullName evidence="1">NCVP2</fullName>
    </alternativeName>
    <alternativeName>
        <fullName evidence="1">Non-structural RNA-binding protein 53</fullName>
        <shortName evidence="1">NS53</shortName>
    </alternativeName>
</protein>
<feature type="chain" id="PRO_0000369078" description="Non-structural protein 1">
    <location>
        <begin position="1"/>
        <end position="493"/>
    </location>
</feature>
<feature type="region of interest" description="RNA-binding" evidence="1">
    <location>
        <begin position="1"/>
        <end position="81"/>
    </location>
</feature>
<feature type="region of interest" description="Zinc-binding domain" evidence="1">
    <location>
        <begin position="42"/>
        <end position="79"/>
    </location>
</feature>
<feature type="region of interest" description="Important for cytoskeleton localization" evidence="1">
    <location>
        <begin position="82"/>
        <end position="176"/>
    </location>
</feature>
<feature type="region of interest" description="Interaction with host IRF3" evidence="1">
    <location>
        <begin position="319"/>
        <end position="493"/>
    </location>
</feature>
<feature type="short sequence motif" description="pLxIS motif" evidence="1">
    <location>
        <begin position="483"/>
        <end position="486"/>
    </location>
</feature>
<evidence type="ECO:0000255" key="1">
    <source>
        <dbReference type="HAMAP-Rule" id="MF_04088"/>
    </source>
</evidence>
<sequence>MAAFKDACFHYRRITKLNRELLRIGANSSWTPAPPSNIRGWCLECCQLTNLTYCYGCSLHHVCQWCVQYGRCFLDDEPHLLRLRTVKSPITTEKLASIVKMYQLLFPINHSIVKKFVKSTKQHKCRNDFELSWYNQLVLPITLTAAAVHCDDCIYYIFGHYEGKANQSNLPYRFVNCVDEYDRLLLDDVNFDRMAFLPGRLQKYYAKRYFIASRIPSAQPAKLTYSDFSVKTLINSGAYARRRIIYRSVTNFHWQSHEDPLNDLLLDKDKILAALMTNERRPFLTHNLNFTSLLHELSELVHHAKPCYLHSFHVQPASKVHCHSCSVAFDFHTVDWRIRRIYDDVMYFLRACCRSNVSSGSCSSLDPMDAVVKAALLEMFTESFKHHAHLLFHCFDPVQIDDVSYILFNYPVNYDIYDFIIRTLATERLPFTLSYKQFTTILFALVERWYDLSQIERLPLSIAPTNRLIELQERGNLAEEFDLLLSSSDSEED</sequence>
<dbReference type="EMBL" id="U08423">
    <property type="protein sequence ID" value="AAA50486.1"/>
    <property type="molecule type" value="Genomic_RNA"/>
</dbReference>
<dbReference type="GO" id="GO:0030430">
    <property type="term" value="C:host cell cytoplasm"/>
    <property type="evidence" value="ECO:0007669"/>
    <property type="project" value="UniProtKB-UniRule"/>
</dbReference>
<dbReference type="GO" id="GO:0044163">
    <property type="term" value="C:host cytoskeleton"/>
    <property type="evidence" value="ECO:0007669"/>
    <property type="project" value="UniProtKB-SubCell"/>
</dbReference>
<dbReference type="GO" id="GO:0046872">
    <property type="term" value="F:metal ion binding"/>
    <property type="evidence" value="ECO:0007669"/>
    <property type="project" value="UniProtKB-UniRule"/>
</dbReference>
<dbReference type="GO" id="GO:0003723">
    <property type="term" value="F:RNA binding"/>
    <property type="evidence" value="ECO:0007669"/>
    <property type="project" value="UniProtKB-UniRule"/>
</dbReference>
<dbReference type="GO" id="GO:0039548">
    <property type="term" value="P:symbiont-mediated suppression of host cytoplasmic pattern recognition receptor signaling pathway via inhibition of IRF3 activity"/>
    <property type="evidence" value="ECO:0007669"/>
    <property type="project" value="UniProtKB-UniRule"/>
</dbReference>
<dbReference type="GO" id="GO:0039557">
    <property type="term" value="P:symbiont-mediated suppression of host cytoplasmic pattern recognition receptor signaling pathway via inhibition of IRF7 activity"/>
    <property type="evidence" value="ECO:0007669"/>
    <property type="project" value="UniProtKB-UniRule"/>
</dbReference>
<dbReference type="HAMAP" id="MF_04088">
    <property type="entry name" value="ROTA_NSP1"/>
    <property type="match status" value="1"/>
</dbReference>
<dbReference type="InterPro" id="IPR002148">
    <property type="entry name" value="Rotavirus_NSP1"/>
</dbReference>
<dbReference type="Pfam" id="PF00981">
    <property type="entry name" value="Rota_NS53"/>
    <property type="match status" value="1"/>
</dbReference>
<organismHost>
    <name type="scientific">Mus musculus musculus</name>
    <name type="common">eastern European house mouse</name>
    <dbReference type="NCBI Taxonomy" id="39442"/>
</organismHost>
<keyword id="KW-1035">Host cytoplasm</keyword>
<keyword id="KW-1037">Host cytoskeleton</keyword>
<keyword id="KW-0945">Host-virus interaction</keyword>
<keyword id="KW-1090">Inhibition of host innate immune response by virus</keyword>
<keyword id="KW-1092">Inhibition of host IRF3 by virus</keyword>
<keyword id="KW-1093">Inhibition of host IRF7 by virus</keyword>
<keyword id="KW-1113">Inhibition of host RLR pathway by virus</keyword>
<keyword id="KW-0922">Interferon antiviral system evasion</keyword>
<keyword id="KW-0479">Metal-binding</keyword>
<keyword id="KW-0694">RNA-binding</keyword>
<keyword id="KW-0899">Viral immunoevasion</keyword>
<proteinExistence type="inferred from homology"/>